<dbReference type="EMBL" id="CP000687">
    <property type="protein sequence ID" value="ABY70105.1"/>
    <property type="molecule type" value="Genomic_DNA"/>
</dbReference>
<dbReference type="RefSeq" id="WP_005619584.1">
    <property type="nucleotide sequence ID" value="NC_010278.1"/>
</dbReference>
<dbReference type="SMR" id="B0BRC0"/>
<dbReference type="GeneID" id="48599797"/>
<dbReference type="KEGG" id="apj:APJL_1553"/>
<dbReference type="HOGENOM" id="CLU_168367_0_0_6"/>
<dbReference type="Proteomes" id="UP000008547">
    <property type="component" value="Chromosome"/>
</dbReference>
<dbReference type="GO" id="GO:0045283">
    <property type="term" value="C:fumarate reductase complex"/>
    <property type="evidence" value="ECO:0007669"/>
    <property type="project" value="UniProtKB-UniRule"/>
</dbReference>
<dbReference type="GO" id="GO:0005886">
    <property type="term" value="C:plasma membrane"/>
    <property type="evidence" value="ECO:0007669"/>
    <property type="project" value="UniProtKB-SubCell"/>
</dbReference>
<dbReference type="GO" id="GO:0000104">
    <property type="term" value="F:succinate dehydrogenase activity"/>
    <property type="evidence" value="ECO:0007669"/>
    <property type="project" value="UniProtKB-UniRule"/>
</dbReference>
<dbReference type="GO" id="GO:0006106">
    <property type="term" value="P:fumarate metabolic process"/>
    <property type="evidence" value="ECO:0007669"/>
    <property type="project" value="InterPro"/>
</dbReference>
<dbReference type="CDD" id="cd00547">
    <property type="entry name" value="QFR_TypeD_subunitD"/>
    <property type="match status" value="1"/>
</dbReference>
<dbReference type="Gene3D" id="1.20.1300.10">
    <property type="entry name" value="Fumarate reductase/succinate dehydrogenase, transmembrane subunit"/>
    <property type="match status" value="1"/>
</dbReference>
<dbReference type="HAMAP" id="MF_00709">
    <property type="entry name" value="Fumarate_red_D"/>
    <property type="match status" value="1"/>
</dbReference>
<dbReference type="InterPro" id="IPR003418">
    <property type="entry name" value="Fumarate_red_D"/>
</dbReference>
<dbReference type="InterPro" id="IPR034804">
    <property type="entry name" value="SQR/QFR_C/D"/>
</dbReference>
<dbReference type="NCBIfam" id="NF003977">
    <property type="entry name" value="PRK05470.1-1"/>
    <property type="match status" value="1"/>
</dbReference>
<dbReference type="Pfam" id="PF02313">
    <property type="entry name" value="Fumarate_red_D"/>
    <property type="match status" value="1"/>
</dbReference>
<dbReference type="PIRSF" id="PIRSF000179">
    <property type="entry name" value="FrdD"/>
    <property type="match status" value="1"/>
</dbReference>
<dbReference type="SUPFAM" id="SSF81343">
    <property type="entry name" value="Fumarate reductase respiratory complex transmembrane subunits"/>
    <property type="match status" value="1"/>
</dbReference>
<organism>
    <name type="scientific">Actinobacillus pleuropneumoniae serotype 3 (strain JL03)</name>
    <dbReference type="NCBI Taxonomy" id="434271"/>
    <lineage>
        <taxon>Bacteria</taxon>
        <taxon>Pseudomonadati</taxon>
        <taxon>Pseudomonadota</taxon>
        <taxon>Gammaproteobacteria</taxon>
        <taxon>Pasteurellales</taxon>
        <taxon>Pasteurellaceae</taxon>
        <taxon>Actinobacillus</taxon>
    </lineage>
</organism>
<accession>B0BRC0</accession>
<comment type="function">
    <text evidence="1">Anchors the catalytic components of the fumarate reductase complex to the cell membrane, binds quinones.</text>
</comment>
<comment type="subunit">
    <text evidence="1">Part of an enzyme complex containing four subunits: a flavoprotein (FrdA), an iron-sulfur protein (FrdB), and two hydrophobic anchor proteins (FrdC and FrdD).</text>
</comment>
<comment type="subcellular location">
    <subcellularLocation>
        <location evidence="1">Cell inner membrane</location>
        <topology evidence="1">Multi-pass membrane protein</topology>
    </subcellularLocation>
</comment>
<comment type="similarity">
    <text evidence="1">Belongs to the FrdD family.</text>
</comment>
<proteinExistence type="inferred from homology"/>
<name>FRDD_ACTPJ</name>
<protein>
    <recommendedName>
        <fullName evidence="1">Fumarate reductase subunit D</fullName>
    </recommendedName>
    <alternativeName>
        <fullName evidence="1">Quinol-fumarate reductase subunit D</fullName>
        <shortName evidence="1">QFR subunit D</shortName>
    </alternativeName>
</protein>
<feature type="chain" id="PRO_1000132394" description="Fumarate reductase subunit D">
    <location>
        <begin position="1"/>
        <end position="114"/>
    </location>
</feature>
<feature type="transmembrane region" description="Helical" evidence="1">
    <location>
        <begin position="27"/>
        <end position="47"/>
    </location>
</feature>
<feature type="transmembrane region" description="Helical" evidence="1">
    <location>
        <begin position="50"/>
        <end position="70"/>
    </location>
</feature>
<feature type="transmembrane region" description="Helical" evidence="1">
    <location>
        <begin position="94"/>
        <end position="114"/>
    </location>
</feature>
<reference key="1">
    <citation type="journal article" date="2008" name="PLoS ONE">
        <title>Genome biology of Actinobacillus pleuropneumoniae JL03, an isolate of serotype 3 prevalent in China.</title>
        <authorList>
            <person name="Xu Z."/>
            <person name="Zhou Y."/>
            <person name="Li L."/>
            <person name="Zhou R."/>
            <person name="Xiao S."/>
            <person name="Wan Y."/>
            <person name="Zhang S."/>
            <person name="Wang K."/>
            <person name="Li W."/>
            <person name="Li L."/>
            <person name="Jin H."/>
            <person name="Kang M."/>
            <person name="Dalai B."/>
            <person name="Li T."/>
            <person name="Liu L."/>
            <person name="Cheng Y."/>
            <person name="Zhang L."/>
            <person name="Xu T."/>
            <person name="Zheng H."/>
            <person name="Pu S."/>
            <person name="Wang B."/>
            <person name="Gu W."/>
            <person name="Zhang X.L."/>
            <person name="Zhu G.-F."/>
            <person name="Wang S."/>
            <person name="Zhao G.-P."/>
            <person name="Chen H."/>
        </authorList>
    </citation>
    <scope>NUCLEOTIDE SEQUENCE [LARGE SCALE GENOMIC DNA]</scope>
    <source>
        <strain>JL03</strain>
    </source>
</reference>
<keyword id="KW-0997">Cell inner membrane</keyword>
<keyword id="KW-1003">Cell membrane</keyword>
<keyword id="KW-0472">Membrane</keyword>
<keyword id="KW-0812">Transmembrane</keyword>
<keyword id="KW-1133">Transmembrane helix</keyword>
<evidence type="ECO:0000255" key="1">
    <source>
        <dbReference type="HAMAP-Rule" id="MF_00709"/>
    </source>
</evidence>
<sequence length="114" mass="12563">MNKQDPKRSNEPPVWLMFSAGGTISAICFPVLLLILGVLLPLGLVPVENIVAFAHTWFGKLVILAVTIFPMWAGMHRVHHGLHDLKIHFPAGGWVFYGLSALYSVIVFFAVIAL</sequence>
<gene>
    <name evidence="1" type="primary">frdD</name>
    <name type="ordered locus">APJL_1553</name>
</gene>